<comment type="subcellular location">
    <subcellularLocation>
        <location>Plastid</location>
    </subcellularLocation>
</comment>
<keyword id="KW-0934">Plastid</keyword>
<feature type="chain" id="PRO_0000217487" description="Uncharacterized 20.0 kDa protein in rps12-trnP intergenic region">
    <location>
        <begin position="1"/>
        <end position="160"/>
    </location>
</feature>
<reference key="1">
    <citation type="journal article" date="1994" name="Curr. Genet.">
        <title>Genes for components of the chloroplast translational apparatus are conserved in the reduced 73-kb plastid DNA of the nonphotosynthetic euglenoid flagellate Astasia longa.</title>
        <authorList>
            <person name="Gockel G."/>
            <person name="Hachtel W."/>
            <person name="Baier S."/>
            <person name="Fliss C."/>
            <person name="Henke M."/>
        </authorList>
    </citation>
    <scope>NUCLEOTIDE SEQUENCE [GENOMIC DNA]</scope>
    <source>
        <strain>CCAP 1204-17a</strain>
    </source>
</reference>
<reference key="2">
    <citation type="journal article" date="2000" name="Protist">
        <title>Complete gene map of the plastid genome of the nonphotosynthetic euglenoid flagellate Astasia longa.</title>
        <authorList>
            <person name="Gockel G."/>
            <person name="Hachtel W."/>
        </authorList>
    </citation>
    <scope>NUCLEOTIDE SEQUENCE [LARGE SCALE GENOMIC DNA]</scope>
    <source>
        <strain>CCAP 1204-17a</strain>
    </source>
</reference>
<name>YCX3_EUGLO</name>
<protein>
    <recommendedName>
        <fullName>Uncharacterized 20.0 kDa protein in rps12-trnP intergenic region</fullName>
    </recommendedName>
    <alternativeName>
        <fullName>ORF160</fullName>
    </alternativeName>
</protein>
<proteinExistence type="predicted"/>
<organism>
    <name type="scientific">Euglena longa</name>
    <name type="common">Euglenophycean alga</name>
    <name type="synonym">Astasia longa</name>
    <dbReference type="NCBI Taxonomy" id="3037"/>
    <lineage>
        <taxon>Eukaryota</taxon>
        <taxon>Discoba</taxon>
        <taxon>Euglenozoa</taxon>
        <taxon>Euglenida</taxon>
        <taxon>Spirocuta</taxon>
        <taxon>Euglenophyceae</taxon>
        <taxon>Euglenales</taxon>
        <taxon>Euglenaceae</taxon>
        <taxon>Euglena</taxon>
    </lineage>
</organism>
<geneLocation type="non-photosynthetic plastid"/>
<accession>P34777</accession>
<dbReference type="EMBL" id="AJ294725">
    <property type="protein sequence ID" value="CAC24587.1"/>
    <property type="molecule type" value="Genomic_DNA"/>
</dbReference>
<dbReference type="PIR" id="S38599">
    <property type="entry name" value="S38599"/>
</dbReference>
<dbReference type="RefSeq" id="NP_074976.1">
    <property type="nucleotide sequence ID" value="NC_002652.1"/>
</dbReference>
<dbReference type="GeneID" id="1457309"/>
<dbReference type="GO" id="GO:0009536">
    <property type="term" value="C:plastid"/>
    <property type="evidence" value="ECO:0007669"/>
    <property type="project" value="UniProtKB-SubCell"/>
</dbReference>
<sequence length="160" mass="19968">MNSSVFIRNARYRCYNYILNFIKFRQSNKPKKISKYKKGKEIKPFDSNNKFHKNRRYWINKQVAIRKMEKEMMLYLLKNKEPLSKEKKIRMKKIRLILKKLIYKKVKTKRQKFKFFKKNKLALNFKRKRYVNVLGRIVPKRFTKLKSKEQAFYFEIYVIY</sequence>